<evidence type="ECO:0000255" key="1"/>
<evidence type="ECO:0000255" key="2">
    <source>
        <dbReference type="PROSITE-ProRule" id="PRU00498"/>
    </source>
</evidence>
<evidence type="ECO:0000256" key="3">
    <source>
        <dbReference type="SAM" id="MobiDB-lite"/>
    </source>
</evidence>
<evidence type="ECO:0000269" key="4">
    <source>
    </source>
</evidence>
<evidence type="ECO:0000303" key="5">
    <source>
    </source>
</evidence>
<evidence type="ECO:0000305" key="6"/>
<evidence type="ECO:0000305" key="7">
    <source>
    </source>
</evidence>
<name>TWMC_TALWO</name>
<gene>
    <name evidence="5" type="primary">TwnC</name>
</gene>
<accession>A0A2L0P0K0</accession>
<protein>
    <recommendedName>
        <fullName evidence="5">Wortmanamides biosynthesis cluster protein C</fullName>
    </recommendedName>
</protein>
<dbReference type="EMBL" id="MG837520">
    <property type="protein sequence ID" value="AUY61971.1"/>
    <property type="molecule type" value="Genomic_DNA"/>
</dbReference>
<dbReference type="EMBL" id="MH399766">
    <property type="protein sequence ID" value="QBC19711.1"/>
    <property type="molecule type" value="Genomic_DNA"/>
</dbReference>
<dbReference type="GlyCosmos" id="A0A2L0P0K0">
    <property type="glycosylation" value="1 site, No reported glycans"/>
</dbReference>
<dbReference type="GO" id="GO:0016020">
    <property type="term" value="C:membrane"/>
    <property type="evidence" value="ECO:0007669"/>
    <property type="project" value="UniProtKB-SubCell"/>
</dbReference>
<dbReference type="InterPro" id="IPR049326">
    <property type="entry name" value="Rhodopsin_dom_fungi"/>
</dbReference>
<dbReference type="InterPro" id="IPR052337">
    <property type="entry name" value="SAT4-like"/>
</dbReference>
<dbReference type="PANTHER" id="PTHR33048:SF47">
    <property type="entry name" value="INTEGRAL MEMBRANE PROTEIN-RELATED"/>
    <property type="match status" value="1"/>
</dbReference>
<dbReference type="PANTHER" id="PTHR33048">
    <property type="entry name" value="PTH11-LIKE INTEGRAL MEMBRANE PROTEIN (AFU_ORTHOLOGUE AFUA_5G11245)"/>
    <property type="match status" value="1"/>
</dbReference>
<dbReference type="Pfam" id="PF20684">
    <property type="entry name" value="Fung_rhodopsin"/>
    <property type="match status" value="1"/>
</dbReference>
<sequence>MAFEIPEDSTQLSQFVTLLIFTPLGIVVTALRFVAVRRVTRKVGFEDWLAVIATIFFILTNLAGLMAISILNGRQLTQEVIESPSDYSRMRKWDIAGLFFYFAQTLSVKLSILAFYHRIFGISSTRCRICIYLLAAAQTILFIAFCIFQGFQCIPLQRYFDLSVPGECKDEGTVILGGELPNSLVDFAMVILAMIMIRPLQLSFSDKFRVTVLFGLGFVVGIIGFVKIAVTYSTSELYAFSMIALWTGVQMFTALLCCSLPMYNTFLPIVADFWNRLSHHSLGWVSRVRSSQSSSKNSRKHGPYDSDQSPGPGWDDLVAYNGTKGLTLPQAPYHGDNHALGNVSPITHPQAYSKQTTRQFDVV</sequence>
<keyword id="KW-0325">Glycoprotein</keyword>
<keyword id="KW-0472">Membrane</keyword>
<keyword id="KW-0812">Transmembrane</keyword>
<keyword id="KW-1133">Transmembrane helix</keyword>
<comment type="function">
    <text evidence="4 7">Part of the gene cluster that mediates the biosynthesis of wortmanamides A and B, reduced long-chain polyketides amidated with a specific omega-amino acid, 5-aminopentanoic acid (5PA) (PubMed:29343058). The PKS modules of TwmB are involved in the synthesis of the polyketide backbone, whereas the non-canonical C domain of TwmB is a bonafide condensation domain that specifically selects 5PA and catalyzes amidation to release polyketide chain (PubMed:29343058). The C domain clearly prefers C16 and C18 fatty acyl substrates, which is consistent with simultaneous formation of both octaketide and nonaketide acyl amides wortmanamides A and B (PubMed:29343058). Because TwmB lacks a designated enoylreductase (ER) domain, the required activity is provided the enoyl reductase TwmE (PubMed:29343058). The roles of the remaining enzymes have still to be clarified (Probable).</text>
</comment>
<comment type="pathway">
    <text evidence="7">Secondary metabolite biosynthesis.</text>
</comment>
<comment type="subcellular location">
    <subcellularLocation>
        <location evidence="1">Membrane</location>
        <topology evidence="1">Multi-pass membrane protein</topology>
    </subcellularLocation>
</comment>
<comment type="similarity">
    <text evidence="6">Belongs to the SAT4 family.</text>
</comment>
<proteinExistence type="inferred from homology"/>
<organism>
    <name type="scientific">Talaromyces wortmannii</name>
    <name type="common">Penicillium wortmannii</name>
    <dbReference type="NCBI Taxonomy" id="28567"/>
    <lineage>
        <taxon>Eukaryota</taxon>
        <taxon>Fungi</taxon>
        <taxon>Dikarya</taxon>
        <taxon>Ascomycota</taxon>
        <taxon>Pezizomycotina</taxon>
        <taxon>Eurotiomycetes</taxon>
        <taxon>Eurotiomycetidae</taxon>
        <taxon>Eurotiales</taxon>
        <taxon>Trichocomaceae</taxon>
        <taxon>Talaromyces</taxon>
        <taxon>Talaromyces sect. Islandici</taxon>
    </lineage>
</organism>
<reference key="1">
    <citation type="journal article" date="2018" name="J. Am. Chem. Soc.">
        <title>Biosynthesis of long-chain N-acyl amide by a truncated polyketide synthase-nonribosomal peptide synthetase hybrid megasynthase in fungi.</title>
        <authorList>
            <person name="Hai Y."/>
            <person name="Tang Y."/>
        </authorList>
    </citation>
    <scope>NUCLEOTIDE SEQUENCE [GENOMIC DNA]</scope>
    <scope>FUNCTION</scope>
    <scope>PATHWAY</scope>
    <source>
        <strain>ATCC 26942 / CBS 387.67 / CCM F-175 / VKM F-2091</strain>
    </source>
</reference>
<feature type="chain" id="PRO_0000452488" description="Wortmanamides biosynthesis cluster protein C">
    <location>
        <begin position="1"/>
        <end position="363"/>
    </location>
</feature>
<feature type="transmembrane region" description="Helical" evidence="1">
    <location>
        <begin position="15"/>
        <end position="35"/>
    </location>
</feature>
<feature type="transmembrane region" description="Helical" evidence="1">
    <location>
        <begin position="48"/>
        <end position="68"/>
    </location>
</feature>
<feature type="transmembrane region" description="Helical" evidence="1">
    <location>
        <begin position="95"/>
        <end position="115"/>
    </location>
</feature>
<feature type="transmembrane region" description="Helical" evidence="1">
    <location>
        <begin position="129"/>
        <end position="149"/>
    </location>
</feature>
<feature type="transmembrane region" description="Helical" evidence="1">
    <location>
        <begin position="175"/>
        <end position="195"/>
    </location>
</feature>
<feature type="transmembrane region" description="Helical" evidence="1">
    <location>
        <begin position="210"/>
        <end position="230"/>
    </location>
</feature>
<feature type="transmembrane region" description="Helical" evidence="1">
    <location>
        <begin position="237"/>
        <end position="257"/>
    </location>
</feature>
<feature type="region of interest" description="Disordered" evidence="3">
    <location>
        <begin position="293"/>
        <end position="312"/>
    </location>
</feature>
<feature type="region of interest" description="Disordered" evidence="3">
    <location>
        <begin position="344"/>
        <end position="363"/>
    </location>
</feature>
<feature type="glycosylation site" description="N-linked (GlcNAc...) asparagine" evidence="2">
    <location>
        <position position="321"/>
    </location>
</feature>